<dbReference type="EMBL" id="CP000493">
    <property type="protein sequence ID" value="ABM79984.1"/>
    <property type="molecule type" value="Genomic_DNA"/>
</dbReference>
<dbReference type="RefSeq" id="WP_011821301.1">
    <property type="nucleotide sequence ID" value="NC_008818.1"/>
</dbReference>
<dbReference type="SMR" id="A2BJ23"/>
<dbReference type="STRING" id="415426.Hbut_0109"/>
<dbReference type="EnsemblBacteria" id="ABM79984">
    <property type="protein sequence ID" value="ABM79984"/>
    <property type="gene ID" value="Hbut_0109"/>
</dbReference>
<dbReference type="GeneID" id="4781406"/>
<dbReference type="KEGG" id="hbu:Hbut_0109"/>
<dbReference type="eggNOG" id="arCOG04229">
    <property type="taxonomic scope" value="Archaea"/>
</dbReference>
<dbReference type="HOGENOM" id="CLU_128576_0_0_2"/>
<dbReference type="OrthoDB" id="7000at2157"/>
<dbReference type="Proteomes" id="UP000002593">
    <property type="component" value="Chromosome"/>
</dbReference>
<dbReference type="GO" id="GO:0009347">
    <property type="term" value="C:aspartate carbamoyltransferase complex"/>
    <property type="evidence" value="ECO:0007669"/>
    <property type="project" value="InterPro"/>
</dbReference>
<dbReference type="GO" id="GO:0046872">
    <property type="term" value="F:metal ion binding"/>
    <property type="evidence" value="ECO:0007669"/>
    <property type="project" value="UniProtKB-KW"/>
</dbReference>
<dbReference type="GO" id="GO:0006207">
    <property type="term" value="P:'de novo' pyrimidine nucleobase biosynthetic process"/>
    <property type="evidence" value="ECO:0007669"/>
    <property type="project" value="InterPro"/>
</dbReference>
<dbReference type="GO" id="GO:0006221">
    <property type="term" value="P:pyrimidine nucleotide biosynthetic process"/>
    <property type="evidence" value="ECO:0007669"/>
    <property type="project" value="UniProtKB-UniRule"/>
</dbReference>
<dbReference type="Gene3D" id="2.30.30.20">
    <property type="entry name" value="Aspartate carbamoyltransferase regulatory subunit, C-terminal domain"/>
    <property type="match status" value="1"/>
</dbReference>
<dbReference type="Gene3D" id="3.30.70.140">
    <property type="entry name" value="Aspartate carbamoyltransferase regulatory subunit, N-terminal domain"/>
    <property type="match status" value="1"/>
</dbReference>
<dbReference type="HAMAP" id="MF_00002">
    <property type="entry name" value="Asp_carb_tr_reg"/>
    <property type="match status" value="1"/>
</dbReference>
<dbReference type="InterPro" id="IPR020545">
    <property type="entry name" value="Asp_carbamoyltransf_reg_N"/>
</dbReference>
<dbReference type="InterPro" id="IPR002801">
    <property type="entry name" value="Asp_carbamoylTrfase_reg"/>
</dbReference>
<dbReference type="InterPro" id="IPR020542">
    <property type="entry name" value="Asp_carbamoyltrfase_reg_C"/>
</dbReference>
<dbReference type="InterPro" id="IPR036792">
    <property type="entry name" value="Asp_carbatrfase_reg_C_sf"/>
</dbReference>
<dbReference type="InterPro" id="IPR036793">
    <property type="entry name" value="Asp_carbatrfase_reg_N_sf"/>
</dbReference>
<dbReference type="NCBIfam" id="TIGR00240">
    <property type="entry name" value="ATCase_reg"/>
    <property type="match status" value="1"/>
</dbReference>
<dbReference type="PANTHER" id="PTHR35805">
    <property type="entry name" value="ASPARTATE CARBAMOYLTRANSFERASE REGULATORY CHAIN"/>
    <property type="match status" value="1"/>
</dbReference>
<dbReference type="PANTHER" id="PTHR35805:SF1">
    <property type="entry name" value="ASPARTATE CARBAMOYLTRANSFERASE REGULATORY CHAIN"/>
    <property type="match status" value="1"/>
</dbReference>
<dbReference type="Pfam" id="PF01948">
    <property type="entry name" value="PyrI"/>
    <property type="match status" value="1"/>
</dbReference>
<dbReference type="Pfam" id="PF02748">
    <property type="entry name" value="PyrI_C"/>
    <property type="match status" value="1"/>
</dbReference>
<dbReference type="SUPFAM" id="SSF57825">
    <property type="entry name" value="Aspartate carbamoyltransferase, Regulatory-chain, C-terminal domain"/>
    <property type="match status" value="1"/>
</dbReference>
<dbReference type="SUPFAM" id="SSF54893">
    <property type="entry name" value="Aspartate carbamoyltransferase, Regulatory-chain, N-terminal domain"/>
    <property type="match status" value="1"/>
</dbReference>
<sequence>MESGSGLLVRRIREGTVIDHIPAGRALTVLKILGITGREGARIAVVMNVESRKLGRKDIVKIEGRHLSPEEVDKIALVAPRATINIIHDYRVVAKRRVTVPDIVEGILMCPNPSCITRVGREPVKPRFRVVSRQPLVLQCVYCGTLVSEEDVAEQLAEGG</sequence>
<feature type="chain" id="PRO_0000321499" description="Aspartate carbamoyltransferase regulatory chain">
    <location>
        <begin position="1"/>
        <end position="160"/>
    </location>
</feature>
<feature type="binding site" evidence="1">
    <location>
        <position position="110"/>
    </location>
    <ligand>
        <name>Zn(2+)</name>
        <dbReference type="ChEBI" id="CHEBI:29105"/>
    </ligand>
</feature>
<feature type="binding site" evidence="1">
    <location>
        <position position="115"/>
    </location>
    <ligand>
        <name>Zn(2+)</name>
        <dbReference type="ChEBI" id="CHEBI:29105"/>
    </ligand>
</feature>
<feature type="binding site" evidence="1">
    <location>
        <position position="140"/>
    </location>
    <ligand>
        <name>Zn(2+)</name>
        <dbReference type="ChEBI" id="CHEBI:29105"/>
    </ligand>
</feature>
<feature type="binding site" evidence="1">
    <location>
        <position position="143"/>
    </location>
    <ligand>
        <name>Zn(2+)</name>
        <dbReference type="ChEBI" id="CHEBI:29105"/>
    </ligand>
</feature>
<reference key="1">
    <citation type="journal article" date="2007" name="Archaea">
        <title>The genome of Hyperthermus butylicus: a sulfur-reducing, peptide fermenting, neutrophilic Crenarchaeote growing up to 108 degrees C.</title>
        <authorList>
            <person name="Bruegger K."/>
            <person name="Chen L."/>
            <person name="Stark M."/>
            <person name="Zibat A."/>
            <person name="Redder P."/>
            <person name="Ruepp A."/>
            <person name="Awayez M."/>
            <person name="She Q."/>
            <person name="Garrett R.A."/>
            <person name="Klenk H.-P."/>
        </authorList>
    </citation>
    <scope>NUCLEOTIDE SEQUENCE [LARGE SCALE GENOMIC DNA]</scope>
    <source>
        <strain>DSM 5456 / JCM 9403 / PLM1-5</strain>
    </source>
</reference>
<accession>A2BJ23</accession>
<organism>
    <name type="scientific">Hyperthermus butylicus (strain DSM 5456 / JCM 9403 / PLM1-5)</name>
    <dbReference type="NCBI Taxonomy" id="415426"/>
    <lineage>
        <taxon>Archaea</taxon>
        <taxon>Thermoproteota</taxon>
        <taxon>Thermoprotei</taxon>
        <taxon>Desulfurococcales</taxon>
        <taxon>Pyrodictiaceae</taxon>
        <taxon>Hyperthermus</taxon>
    </lineage>
</organism>
<proteinExistence type="inferred from homology"/>
<protein>
    <recommendedName>
        <fullName evidence="1">Aspartate carbamoyltransferase regulatory chain</fullName>
    </recommendedName>
</protein>
<name>PYRI_HYPBU</name>
<evidence type="ECO:0000255" key="1">
    <source>
        <dbReference type="HAMAP-Rule" id="MF_00002"/>
    </source>
</evidence>
<keyword id="KW-0479">Metal-binding</keyword>
<keyword id="KW-0665">Pyrimidine biosynthesis</keyword>
<keyword id="KW-1185">Reference proteome</keyword>
<keyword id="KW-0862">Zinc</keyword>
<gene>
    <name evidence="1" type="primary">pyrI</name>
    <name type="ordered locus">Hbut_0109</name>
</gene>
<comment type="function">
    <text evidence="1">Involved in allosteric regulation of aspartate carbamoyltransferase.</text>
</comment>
<comment type="cofactor">
    <cofactor evidence="1">
        <name>Zn(2+)</name>
        <dbReference type="ChEBI" id="CHEBI:29105"/>
    </cofactor>
    <text evidence="1">Binds 1 zinc ion per subunit.</text>
</comment>
<comment type="subunit">
    <text evidence="1">Contains catalytic and regulatory chains.</text>
</comment>
<comment type="similarity">
    <text evidence="1">Belongs to the PyrI family.</text>
</comment>